<reference key="1">
    <citation type="submission" date="1999-03" db="EMBL/GenBank/DDBJ databases">
        <title>P.aeruginosa PAO1.</title>
        <authorList>
            <person name="Nashimoto H."/>
        </authorList>
    </citation>
    <scope>NUCLEOTIDE SEQUENCE [GENOMIC DNA]</scope>
    <source>
        <strain>ATCC 15692 / DSM 22644 / CIP 104116 / JCM 14847 / LMG 12228 / 1C / PRS 101 / PAO1</strain>
    </source>
</reference>
<reference key="2">
    <citation type="journal article" date="2000" name="Nature">
        <title>Complete genome sequence of Pseudomonas aeruginosa PAO1, an opportunistic pathogen.</title>
        <authorList>
            <person name="Stover C.K."/>
            <person name="Pham X.-Q.T."/>
            <person name="Erwin A.L."/>
            <person name="Mizoguchi S.D."/>
            <person name="Warrener P."/>
            <person name="Hickey M.J."/>
            <person name="Brinkman F.S.L."/>
            <person name="Hufnagle W.O."/>
            <person name="Kowalik D.J."/>
            <person name="Lagrou M."/>
            <person name="Garber R.L."/>
            <person name="Goltry L."/>
            <person name="Tolentino E."/>
            <person name="Westbrock-Wadman S."/>
            <person name="Yuan Y."/>
            <person name="Brody L.L."/>
            <person name="Coulter S.N."/>
            <person name="Folger K.R."/>
            <person name="Kas A."/>
            <person name="Larbig K."/>
            <person name="Lim R.M."/>
            <person name="Smith K.A."/>
            <person name="Spencer D.H."/>
            <person name="Wong G.K.-S."/>
            <person name="Wu Z."/>
            <person name="Paulsen I.T."/>
            <person name="Reizer J."/>
            <person name="Saier M.H. Jr."/>
            <person name="Hancock R.E.W."/>
            <person name="Lory S."/>
            <person name="Olson M.V."/>
        </authorList>
    </citation>
    <scope>NUCLEOTIDE SEQUENCE [LARGE SCALE GENOMIC DNA]</scope>
    <source>
        <strain>ATCC 15692 / DSM 22644 / CIP 104116 / JCM 14847 / LMG 12228 / 1C / PRS 101 / PAO1</strain>
    </source>
</reference>
<reference key="3">
    <citation type="journal article" date="2012" name="PLoS ONE">
        <title>Tetrahydrodipicolinate N-succinyltransferase and dihydrodipicolinate synthase from Pseudomonas aeruginosa: structure analysis and gene deletion.</title>
        <authorList>
            <person name="Schnell R."/>
            <person name="Oehlmann W."/>
            <person name="Sandalova T."/>
            <person name="Braun Y."/>
            <person name="Huck C."/>
            <person name="Maringer M."/>
            <person name="Singh M."/>
            <person name="Schneider G."/>
        </authorList>
    </citation>
    <scope>X-RAY CRYSTALLOGRAPHY (1.80 ANGSTROMS) OF APOENZYME AND IN COMPLEXES WITH SUCCINATE; COA AND 2-AMINOPIMELATE</scope>
    <scope>FUNCTION</scope>
    <scope>CATALYTIC ACTIVITY</scope>
    <scope>BIOPHYSICOCHEMICAL PROPERTIES</scope>
    <scope>SUBSTRATE SPECIFICITY</scope>
    <scope>ACTIVITY REGULATION</scope>
    <scope>SUBUNIT</scope>
</reference>
<accession>G3XD76</accession>
<accession>Q7DCA5</accession>
<accession>Q9Z9H2</accession>
<feature type="chain" id="PRO_0000421301" description="2,3,4,5-tetrahydropyridine-2,6-dicarboxylate N-succinyltransferase">
    <location>
        <begin position="1"/>
        <end position="344"/>
    </location>
</feature>
<feature type="active site" description="Acyl-anhydride intermediate" evidence="1">
    <location>
        <position position="221"/>
    </location>
</feature>
<feature type="binding site" evidence="1">
    <location>
        <position position="205"/>
    </location>
    <ligand>
        <name>Mg(2+)</name>
        <dbReference type="ChEBI" id="CHEBI:18420"/>
        <note>ligand shared between trimeric partners</note>
    </ligand>
</feature>
<feature type="binding site" evidence="3">
    <location>
        <position position="223"/>
    </location>
    <ligand>
        <name>succinyl-CoA</name>
        <dbReference type="ChEBI" id="CHEBI:57292"/>
    </ligand>
</feature>
<feature type="binding site" evidence="3">
    <location>
        <position position="238"/>
    </location>
    <ligand>
        <name>succinyl-CoA</name>
        <dbReference type="ChEBI" id="CHEBI:57292"/>
    </ligand>
</feature>
<feature type="binding site" evidence="3">
    <location>
        <position position="241"/>
    </location>
    <ligand>
        <name>succinyl-CoA</name>
        <dbReference type="ChEBI" id="CHEBI:57292"/>
    </ligand>
</feature>
<feature type="binding site" evidence="3">
    <location>
        <position position="264"/>
    </location>
    <ligand>
        <name>succinyl-CoA</name>
        <dbReference type="ChEBI" id="CHEBI:57292"/>
    </ligand>
</feature>
<feature type="binding site" evidence="3">
    <location>
        <begin position="279"/>
        <end position="280"/>
    </location>
    <ligand>
        <name>succinyl-CoA</name>
        <dbReference type="ChEBI" id="CHEBI:57292"/>
    </ligand>
</feature>
<feature type="binding site" evidence="3">
    <location>
        <begin position="287"/>
        <end position="289"/>
    </location>
    <ligand>
        <name>succinyl-CoA</name>
        <dbReference type="ChEBI" id="CHEBI:57292"/>
    </ligand>
</feature>
<feature type="binding site" evidence="3">
    <location>
        <position position="304"/>
    </location>
    <ligand>
        <name>succinyl-CoA</name>
        <dbReference type="ChEBI" id="CHEBI:57292"/>
    </ligand>
</feature>
<feature type="binding site" evidence="3">
    <location>
        <begin position="317"/>
        <end position="320"/>
    </location>
    <ligand>
        <name>succinyl-CoA</name>
        <dbReference type="ChEBI" id="CHEBI:57292"/>
    </ligand>
</feature>
<feature type="strand" evidence="5">
    <location>
        <begin position="6"/>
        <end position="15"/>
    </location>
</feature>
<feature type="strand" evidence="5">
    <location>
        <begin position="21"/>
        <end position="28"/>
    </location>
</feature>
<feature type="strand" evidence="5">
    <location>
        <begin position="30"/>
        <end position="32"/>
    </location>
</feature>
<feature type="helix" evidence="5">
    <location>
        <begin position="35"/>
        <end position="45"/>
    </location>
</feature>
<feature type="strand" evidence="5">
    <location>
        <begin position="49"/>
        <end position="56"/>
    </location>
</feature>
<feature type="helix" evidence="5">
    <location>
        <begin position="58"/>
        <end position="68"/>
    </location>
</feature>
<feature type="turn" evidence="5">
    <location>
        <begin position="69"/>
        <end position="71"/>
    </location>
</feature>
<feature type="helix" evidence="5">
    <location>
        <begin position="73"/>
        <end position="83"/>
    </location>
</feature>
<feature type="strand" evidence="5">
    <location>
        <begin position="89"/>
        <end position="96"/>
    </location>
</feature>
<feature type="helix" evidence="5">
    <location>
        <begin position="103"/>
        <end position="114"/>
    </location>
</feature>
<feature type="helix" evidence="5">
    <location>
        <begin position="128"/>
        <end position="131"/>
    </location>
</feature>
<feature type="strand" evidence="5">
    <location>
        <begin position="135"/>
        <end position="138"/>
    </location>
</feature>
<feature type="strand" evidence="5">
    <location>
        <begin position="141"/>
        <end position="144"/>
    </location>
</feature>
<feature type="helix" evidence="5">
    <location>
        <begin position="145"/>
        <end position="157"/>
    </location>
</feature>
<feature type="strand" evidence="5">
    <location>
        <begin position="164"/>
        <end position="170"/>
    </location>
</feature>
<feature type="helix" evidence="5">
    <location>
        <begin position="173"/>
        <end position="175"/>
    </location>
</feature>
<feature type="strand" evidence="5">
    <location>
        <begin position="182"/>
        <end position="186"/>
    </location>
</feature>
<feature type="helix" evidence="5">
    <location>
        <begin position="187"/>
        <end position="189"/>
    </location>
</feature>
<feature type="strand" evidence="5">
    <location>
        <begin position="194"/>
        <end position="196"/>
    </location>
</feature>
<feature type="strand" evidence="5">
    <location>
        <begin position="200"/>
        <end position="202"/>
    </location>
</feature>
<feature type="strand" evidence="5">
    <location>
        <begin position="212"/>
        <end position="220"/>
    </location>
</feature>
<feature type="strand" evidence="5">
    <location>
        <begin position="222"/>
        <end position="224"/>
    </location>
</feature>
<feature type="strand" evidence="5">
    <location>
        <begin position="234"/>
        <end position="236"/>
    </location>
</feature>
<feature type="strand" evidence="4">
    <location>
        <begin position="267"/>
        <end position="270"/>
    </location>
</feature>
<feature type="strand" evidence="5">
    <location>
        <begin position="289"/>
        <end position="293"/>
    </location>
</feature>
<feature type="strand" evidence="5">
    <location>
        <begin position="299"/>
        <end position="304"/>
    </location>
</feature>
<feature type="helix" evidence="5">
    <location>
        <begin position="305"/>
        <end position="308"/>
    </location>
</feature>
<feature type="strand" evidence="5">
    <location>
        <begin position="315"/>
        <end position="318"/>
    </location>
</feature>
<feature type="turn" evidence="5">
    <location>
        <begin position="320"/>
        <end position="322"/>
    </location>
</feature>
<feature type="strand" evidence="5">
    <location>
        <begin position="325"/>
        <end position="328"/>
    </location>
</feature>
<feature type="helix" evidence="4">
    <location>
        <begin position="333"/>
        <end position="341"/>
    </location>
</feature>
<gene>
    <name evidence="1" type="primary">dapD</name>
    <name type="ordered locus">PA3666</name>
</gene>
<evidence type="ECO:0000255" key="1">
    <source>
        <dbReference type="HAMAP-Rule" id="MF_02122"/>
    </source>
</evidence>
<evidence type="ECO:0000269" key="2">
    <source>
    </source>
</evidence>
<evidence type="ECO:0000305" key="3">
    <source>
    </source>
</evidence>
<evidence type="ECO:0007829" key="4">
    <source>
        <dbReference type="PDB" id="3R5C"/>
    </source>
</evidence>
<evidence type="ECO:0007829" key="5">
    <source>
        <dbReference type="PDB" id="3R5D"/>
    </source>
</evidence>
<keyword id="KW-0002">3D-structure</keyword>
<keyword id="KW-0012">Acyltransferase</keyword>
<keyword id="KW-0028">Amino-acid biosynthesis</keyword>
<keyword id="KW-0963">Cytoplasm</keyword>
<keyword id="KW-0220">Diaminopimelate biosynthesis</keyword>
<keyword id="KW-0457">Lysine biosynthesis</keyword>
<keyword id="KW-0460">Magnesium</keyword>
<keyword id="KW-0479">Metal-binding</keyword>
<keyword id="KW-1185">Reference proteome</keyword>
<keyword id="KW-0808">Transferase</keyword>
<protein>
    <recommendedName>
        <fullName evidence="1">2,3,4,5-tetrahydropyridine-2,6-dicarboxylate N-succinyltransferase</fullName>
        <ecNumber evidence="1">2.3.1.117</ecNumber>
    </recommendedName>
    <alternativeName>
        <fullName evidence="1">Tetrahydrodipicolinate N-succinyltransferase</fullName>
        <shortName evidence="1">THDP succinyltransferase</shortName>
        <shortName evidence="1">THP succinyltransferase</shortName>
    </alternativeName>
    <alternativeName>
        <fullName evidence="1">Tetrahydropicolinate succinylase</fullName>
    </alternativeName>
</protein>
<organism>
    <name type="scientific">Pseudomonas aeruginosa (strain ATCC 15692 / DSM 22644 / CIP 104116 / JCM 14847 / LMG 12228 / 1C / PRS 101 / PAO1)</name>
    <dbReference type="NCBI Taxonomy" id="208964"/>
    <lineage>
        <taxon>Bacteria</taxon>
        <taxon>Pseudomonadati</taxon>
        <taxon>Pseudomonadota</taxon>
        <taxon>Gammaproteobacteria</taxon>
        <taxon>Pseudomonadales</taxon>
        <taxon>Pseudomonadaceae</taxon>
        <taxon>Pseudomonas</taxon>
    </lineage>
</organism>
<name>DAPD_PSEAE</name>
<proteinExistence type="evidence at protein level"/>
<dbReference type="EC" id="2.3.1.117" evidence="1"/>
<dbReference type="EMBL" id="AB024601">
    <property type="protein sequence ID" value="BAA75911.1"/>
    <property type="molecule type" value="Genomic_DNA"/>
</dbReference>
<dbReference type="EMBL" id="AE004091">
    <property type="protein sequence ID" value="AAG07054.1"/>
    <property type="molecule type" value="Genomic_DNA"/>
</dbReference>
<dbReference type="PIR" id="E83187">
    <property type="entry name" value="E83187"/>
</dbReference>
<dbReference type="RefSeq" id="NP_252356.1">
    <property type="nucleotide sequence ID" value="NC_002516.2"/>
</dbReference>
<dbReference type="RefSeq" id="WP_003113860.1">
    <property type="nucleotide sequence ID" value="NZ_QZGE01000001.1"/>
</dbReference>
<dbReference type="PDB" id="3R5A">
    <property type="method" value="X-ray"/>
    <property type="resolution" value="1.89 A"/>
    <property type="chains" value="A/B/C/D/E/F=1-344"/>
</dbReference>
<dbReference type="PDB" id="3R5B">
    <property type="method" value="X-ray"/>
    <property type="resolution" value="2.51 A"/>
    <property type="chains" value="A/B/C/D/E/F=1-344"/>
</dbReference>
<dbReference type="PDB" id="3R5C">
    <property type="method" value="X-ray"/>
    <property type="resolution" value="2.40 A"/>
    <property type="chains" value="A/B/C=1-344"/>
</dbReference>
<dbReference type="PDB" id="3R5D">
    <property type="method" value="X-ray"/>
    <property type="resolution" value="1.80 A"/>
    <property type="chains" value="A/B/C/D/E/F=1-344"/>
</dbReference>
<dbReference type="PDBsum" id="3R5A"/>
<dbReference type="PDBsum" id="3R5B"/>
<dbReference type="PDBsum" id="3R5C"/>
<dbReference type="PDBsum" id="3R5D"/>
<dbReference type="SMR" id="G3XD76"/>
<dbReference type="STRING" id="208964.PA3666"/>
<dbReference type="PaxDb" id="208964-PA3666"/>
<dbReference type="DNASU" id="880584"/>
<dbReference type="GeneID" id="880584"/>
<dbReference type="KEGG" id="pae:PA3666"/>
<dbReference type="PATRIC" id="fig|208964.12.peg.3835"/>
<dbReference type="PseudoCAP" id="PA3666"/>
<dbReference type="HOGENOM" id="CLU_057490_0_0_6"/>
<dbReference type="InParanoid" id="G3XD76"/>
<dbReference type="OrthoDB" id="9782799at2"/>
<dbReference type="PhylomeDB" id="G3XD76"/>
<dbReference type="BioCyc" id="PAER208964:G1FZ6-3736-MONOMER"/>
<dbReference type="UniPathway" id="UPA00034">
    <property type="reaction ID" value="UER00019"/>
</dbReference>
<dbReference type="EvolutionaryTrace" id="G3XD76"/>
<dbReference type="Proteomes" id="UP000002438">
    <property type="component" value="Chromosome"/>
</dbReference>
<dbReference type="GO" id="GO:0005737">
    <property type="term" value="C:cytoplasm"/>
    <property type="evidence" value="ECO:0007669"/>
    <property type="project" value="UniProtKB-SubCell"/>
</dbReference>
<dbReference type="GO" id="GO:0008666">
    <property type="term" value="F:2,3,4,5-tetrahydropyridine-2,6-dicarboxylate N-succinyltransferase activity"/>
    <property type="evidence" value="ECO:0007669"/>
    <property type="project" value="UniProtKB-UniRule"/>
</dbReference>
<dbReference type="GO" id="GO:0000287">
    <property type="term" value="F:magnesium ion binding"/>
    <property type="evidence" value="ECO:0007669"/>
    <property type="project" value="UniProtKB-UniRule"/>
</dbReference>
<dbReference type="GO" id="GO:0019877">
    <property type="term" value="P:diaminopimelate biosynthetic process"/>
    <property type="evidence" value="ECO:0007669"/>
    <property type="project" value="UniProtKB-UniRule"/>
</dbReference>
<dbReference type="GO" id="GO:0009089">
    <property type="term" value="P:lysine biosynthetic process via diaminopimelate"/>
    <property type="evidence" value="ECO:0007669"/>
    <property type="project" value="UniProtKB-UniRule"/>
</dbReference>
<dbReference type="CDD" id="cd04649">
    <property type="entry name" value="LbH_THP_succinylT_putative"/>
    <property type="match status" value="1"/>
</dbReference>
<dbReference type="FunFam" id="2.160.10.10:FF:000009">
    <property type="entry name" value="2,3,4,5-tetrahydropyridine-2,6-dicarboxylate N-succinyltransferase"/>
    <property type="match status" value="1"/>
</dbReference>
<dbReference type="FunFam" id="3.30.60.70:FF:000001">
    <property type="entry name" value="2,3,4,5-tetrahydropyridine-2,6-dicarboxylate N-succinyltransferase"/>
    <property type="match status" value="1"/>
</dbReference>
<dbReference type="Gene3D" id="3.30.70.2010">
    <property type="match status" value="1"/>
</dbReference>
<dbReference type="Gene3D" id="2.160.10.10">
    <property type="entry name" value="Hexapeptide repeat proteins"/>
    <property type="match status" value="1"/>
</dbReference>
<dbReference type="Gene3D" id="3.30.60.70">
    <property type="entry name" value="Trimeric LpxA-like enzymes"/>
    <property type="match status" value="1"/>
</dbReference>
<dbReference type="HAMAP" id="MF_02122">
    <property type="entry name" value="DapD_type2"/>
    <property type="match status" value="1"/>
</dbReference>
<dbReference type="InterPro" id="IPR019876">
    <property type="entry name" value="DapD_gammaproteobac"/>
</dbReference>
<dbReference type="InterPro" id="IPR001451">
    <property type="entry name" value="Hexapep"/>
</dbReference>
<dbReference type="InterPro" id="IPR032784">
    <property type="entry name" value="THDPS_M"/>
</dbReference>
<dbReference type="InterPro" id="IPR038361">
    <property type="entry name" value="THDPS_M_sf"/>
</dbReference>
<dbReference type="InterPro" id="IPR011004">
    <property type="entry name" value="Trimer_LpxA-like_sf"/>
</dbReference>
<dbReference type="InterPro" id="IPR026586">
    <property type="entry name" value="Type2_DapD"/>
</dbReference>
<dbReference type="NCBIfam" id="TIGR03536">
    <property type="entry name" value="DapD_gpp"/>
    <property type="match status" value="1"/>
</dbReference>
<dbReference type="Pfam" id="PF14602">
    <property type="entry name" value="Hexapep_2"/>
    <property type="match status" value="1"/>
</dbReference>
<dbReference type="Pfam" id="PF14789">
    <property type="entry name" value="THDPS_M"/>
    <property type="match status" value="1"/>
</dbReference>
<dbReference type="Pfam" id="PF14790">
    <property type="entry name" value="THDPS_N"/>
    <property type="match status" value="1"/>
</dbReference>
<dbReference type="SUPFAM" id="SSF51161">
    <property type="entry name" value="Trimeric LpxA-like enzymes"/>
    <property type="match status" value="1"/>
</dbReference>
<sequence length="344" mass="35973">MSQSLFSLAFGVGTQNRQEAWLEVFYALPLLKPSSEIVAAVAPILGYAAGNQALTFTSQQAYQLADALKGIDAAQSALLSRLAESQKPLVATLLAEDAAPSSTAEAYLKLHLLSHRLVKPHAVNLSGIFPLLPNVAWTNIGAVDLAELAELQLEARLKGKLLEVFSVDKFPKMTDYVVPAGVRIADTARVRLGAYIGEGTTVMHEGFVNFNAGTEGPGMIEGRVSAGVFVGKGSDLGGGCSTMGTLSGGGNIVISVGEGCLIGANAGIGIPLGDRNIVEAGLYITAGTKVALLDEQNALVKVVKARDLAGQPDLLFRRNSQNGAVECKTNKTAIELNEALHAHN</sequence>
<comment type="function">
    <text evidence="1 2">Catalyzes the conversion of the cyclic tetrahydrodipicolinate (THDP) into the acyclic N-succinyl-L-2-amino-6-oxopimelate using succinyl-CoA (By similarity). Displays succinyl transferase activity with L-2-aminopimelate and succinyl-CoA as substrates (PubMed:22359568).</text>
</comment>
<comment type="catalytic activity">
    <reaction evidence="1">
        <text>(S)-2,3,4,5-tetrahydrodipicolinate + succinyl-CoA + H2O = (S)-2-succinylamino-6-oxoheptanedioate + CoA</text>
        <dbReference type="Rhea" id="RHEA:17325"/>
        <dbReference type="ChEBI" id="CHEBI:15377"/>
        <dbReference type="ChEBI" id="CHEBI:15685"/>
        <dbReference type="ChEBI" id="CHEBI:16845"/>
        <dbReference type="ChEBI" id="CHEBI:57287"/>
        <dbReference type="ChEBI" id="CHEBI:57292"/>
        <dbReference type="EC" id="2.3.1.117"/>
    </reaction>
</comment>
<comment type="cofactor">
    <text evidence="2">Magnesium ions are not essential for catalysis.</text>
</comment>
<comment type="activity regulation">
    <text evidence="2">Weakly inhibited by D-2-aminopimelate.</text>
</comment>
<comment type="biophysicochemical properties">
    <kinetics>
        <KM evidence="2">7 mM for L-2-aminopimelate</KM>
        <Vmax evidence="2">105.0 umol/min/mg enzyme</Vmax>
    </kinetics>
</comment>
<comment type="pathway">
    <text evidence="1">Amino-acid biosynthesis; L-lysine biosynthesis via DAP pathway; LL-2,6-diaminopimelate from (S)-tetrahydrodipicolinate (succinylase route): step 1/3.</text>
</comment>
<comment type="subunit">
    <text evidence="2">Homotrimer.</text>
</comment>
<comment type="subcellular location">
    <subcellularLocation>
        <location evidence="1">Cytoplasm</location>
    </subcellularLocation>
</comment>
<comment type="similarity">
    <text evidence="1">Belongs to the type 2 tetrahydrodipicolinate N-succinyltransferase family.</text>
</comment>